<name>FRMD3_XENTR</name>
<keyword id="KW-0472">Membrane</keyword>
<keyword id="KW-1185">Reference proteome</keyword>
<keyword id="KW-0812">Transmembrane</keyword>
<keyword id="KW-1133">Transmembrane helix</keyword>
<proteinExistence type="evidence at transcript level"/>
<accession>Q0P4Q4</accession>
<protein>
    <recommendedName>
        <fullName>FERM domain-containing protein 3</fullName>
    </recommendedName>
</protein>
<gene>
    <name type="primary">frmd3</name>
</gene>
<reference key="1">
    <citation type="submission" date="2006-08" db="EMBL/GenBank/DDBJ databases">
        <authorList>
            <consortium name="NIH - Xenopus Gene Collection (XGC) project"/>
        </authorList>
    </citation>
    <scope>NUCLEOTIDE SEQUENCE [LARGE SCALE MRNA]</scope>
    <source>
        <tissue>Testis</tissue>
    </source>
</reference>
<comment type="subcellular location">
    <subcellularLocation>
        <location evidence="4">Membrane</location>
        <topology evidence="4">Single-pass membrane protein</topology>
    </subcellularLocation>
</comment>
<comment type="sequence caution" evidence="4">
    <conflict type="erroneous initiation">
        <sequence resource="EMBL-CDS" id="AAI21951"/>
    </conflict>
</comment>
<evidence type="ECO:0000255" key="1"/>
<evidence type="ECO:0000255" key="2">
    <source>
        <dbReference type="PROSITE-ProRule" id="PRU00084"/>
    </source>
</evidence>
<evidence type="ECO:0000256" key="3">
    <source>
        <dbReference type="SAM" id="MobiDB-lite"/>
    </source>
</evidence>
<evidence type="ECO:0000305" key="4"/>
<feature type="chain" id="PRO_0000318101" description="FERM domain-containing protein 3">
    <location>
        <begin position="1"/>
        <end position="600"/>
    </location>
</feature>
<feature type="transmembrane region" description="Helical" evidence="1">
    <location>
        <begin position="534"/>
        <end position="554"/>
    </location>
</feature>
<feature type="domain" description="FERM" evidence="2">
    <location>
        <begin position="31"/>
        <end position="311"/>
    </location>
</feature>
<feature type="region of interest" description="Disordered" evidence="3">
    <location>
        <begin position="413"/>
        <end position="440"/>
    </location>
</feature>
<sequence length="600" mass="69061">MFGCQCPRKKKGTMTMMRLRTASLRSLNLDMRCTIRLLDDTEISFNIQRDTKGQFLLDYICNHYNLLEKDYFGIRFVDPEKQRHWLDPSKPVAKQMKSHPPYTMCFRVKFYPHEPLKIKEELTRYLLYLQIKRDIFHGRLLCCFADAAFLGACIVQAEIGDYDPDEHPDNYICDFKIFPKQSQKLERKIVEIHKNELRGQSPSVSEFNLLLKAHSLETYGVDPHPCKDSTGTTTFLGYTAAGFVVFQGNKRIHLIKWPDICKMKFDGKTFHVVVMQKEKKNILTYHTSTPAACKHLWKCGVENQAFYKYAKSSQVKTVTSSNIFFKGSRFRYCGKVAKEVVEASSKIQRDPPEVHRSLIPHSRSSYSLNKQLIINMEPLQPLIPSPNEEEEEEEEENQIDEGILLLQQSEASSAPVLGNSPARGLETTADVTHDEEESIREEPLTISEQVYNPSASLLPTPVDEGIDMLFNSPLRAEREKDDTDSFEDLEADEHAFLIAEEEEMKEARKALSWSYNFIMGNMQLNAFLKSFSKLLLAAIGLLMVVLPLLLILLESDIDVSFLREIRLTPEFEQFHHEYYCPFRKWVACKLSAALNLFGST</sequence>
<organism>
    <name type="scientific">Xenopus tropicalis</name>
    <name type="common">Western clawed frog</name>
    <name type="synonym">Silurana tropicalis</name>
    <dbReference type="NCBI Taxonomy" id="8364"/>
    <lineage>
        <taxon>Eukaryota</taxon>
        <taxon>Metazoa</taxon>
        <taxon>Chordata</taxon>
        <taxon>Craniata</taxon>
        <taxon>Vertebrata</taxon>
        <taxon>Euteleostomi</taxon>
        <taxon>Amphibia</taxon>
        <taxon>Batrachia</taxon>
        <taxon>Anura</taxon>
        <taxon>Pipoidea</taxon>
        <taxon>Pipidae</taxon>
        <taxon>Xenopodinae</taxon>
        <taxon>Xenopus</taxon>
        <taxon>Silurana</taxon>
    </lineage>
</organism>
<dbReference type="EMBL" id="BC121950">
    <property type="protein sequence ID" value="AAI21951.1"/>
    <property type="status" value="ALT_INIT"/>
    <property type="molecule type" value="mRNA"/>
</dbReference>
<dbReference type="RefSeq" id="NP_001072510.1">
    <property type="nucleotide sequence ID" value="NM_001079042.1"/>
</dbReference>
<dbReference type="SMR" id="Q0P4Q4"/>
<dbReference type="FunCoup" id="Q0P4Q4">
    <property type="interactions" value="172"/>
</dbReference>
<dbReference type="STRING" id="8364.ENSXETP00000046986"/>
<dbReference type="PaxDb" id="8364-ENSXETP00000036577"/>
<dbReference type="DNASU" id="779965"/>
<dbReference type="GeneID" id="779965"/>
<dbReference type="KEGG" id="xtr:779965"/>
<dbReference type="AGR" id="Xenbase:XB-GENE-1011845"/>
<dbReference type="CTD" id="257019"/>
<dbReference type="Xenbase" id="XB-GENE-1011845">
    <property type="gene designation" value="frmd3"/>
</dbReference>
<dbReference type="eggNOG" id="KOG3530">
    <property type="taxonomic scope" value="Eukaryota"/>
</dbReference>
<dbReference type="HOGENOM" id="CLU_003623_1_7_1"/>
<dbReference type="InParanoid" id="Q0P4Q4"/>
<dbReference type="OrthoDB" id="6266673at2759"/>
<dbReference type="TreeFam" id="TF343477"/>
<dbReference type="Proteomes" id="UP000008143">
    <property type="component" value="Chromosome 1"/>
</dbReference>
<dbReference type="Bgee" id="ENSXETG00000016772">
    <property type="expression patterns" value="Expressed in 4-cell stage embryo and 10 other cell types or tissues"/>
</dbReference>
<dbReference type="GO" id="GO:0005856">
    <property type="term" value="C:cytoskeleton"/>
    <property type="evidence" value="ECO:0007669"/>
    <property type="project" value="InterPro"/>
</dbReference>
<dbReference type="GO" id="GO:0016020">
    <property type="term" value="C:membrane"/>
    <property type="evidence" value="ECO:0007669"/>
    <property type="project" value="UniProtKB-SubCell"/>
</dbReference>
<dbReference type="GO" id="GO:0008092">
    <property type="term" value="F:cytoskeletal protein binding"/>
    <property type="evidence" value="ECO:0007669"/>
    <property type="project" value="InterPro"/>
</dbReference>
<dbReference type="CDD" id="cd14473">
    <property type="entry name" value="FERM_B-lobe"/>
    <property type="match status" value="1"/>
</dbReference>
<dbReference type="CDD" id="cd13192">
    <property type="entry name" value="FERM_C_FRMD3_FRMD5"/>
    <property type="match status" value="1"/>
</dbReference>
<dbReference type="CDD" id="cd17102">
    <property type="entry name" value="FERM_F1_FRMD3"/>
    <property type="match status" value="1"/>
</dbReference>
<dbReference type="FunFam" id="3.10.20.90:FF:000002">
    <property type="entry name" value="Erythrocyte protein band 4.1-like 3"/>
    <property type="match status" value="1"/>
</dbReference>
<dbReference type="FunFam" id="2.30.29.30:FF:000043">
    <property type="entry name" value="FERM domain-containing protein 5"/>
    <property type="match status" value="1"/>
</dbReference>
<dbReference type="FunFam" id="1.20.80.10:FF:000006">
    <property type="entry name" value="FERM domain-containing protein 5 isoform X1"/>
    <property type="match status" value="1"/>
</dbReference>
<dbReference type="Gene3D" id="1.20.80.10">
    <property type="match status" value="1"/>
</dbReference>
<dbReference type="Gene3D" id="3.10.20.90">
    <property type="entry name" value="Phosphatidylinositol 3-kinase Catalytic Subunit, Chain A, domain 1"/>
    <property type="match status" value="1"/>
</dbReference>
<dbReference type="Gene3D" id="2.30.29.30">
    <property type="entry name" value="Pleckstrin-homology domain (PH domain)/Phosphotyrosine-binding domain (PTB)"/>
    <property type="match status" value="1"/>
</dbReference>
<dbReference type="InterPro" id="IPR019749">
    <property type="entry name" value="Band_41_domain"/>
</dbReference>
<dbReference type="InterPro" id="IPR000798">
    <property type="entry name" value="Ez/rad/moesin-like"/>
</dbReference>
<dbReference type="InterPro" id="IPR014847">
    <property type="entry name" value="FA"/>
</dbReference>
<dbReference type="InterPro" id="IPR014352">
    <property type="entry name" value="FERM/acyl-CoA-bd_prot_sf"/>
</dbReference>
<dbReference type="InterPro" id="IPR035963">
    <property type="entry name" value="FERM_2"/>
</dbReference>
<dbReference type="InterPro" id="IPR019748">
    <property type="entry name" value="FERM_central"/>
</dbReference>
<dbReference type="InterPro" id="IPR019747">
    <property type="entry name" value="FERM_CS"/>
</dbReference>
<dbReference type="InterPro" id="IPR000299">
    <property type="entry name" value="FERM_domain"/>
</dbReference>
<dbReference type="InterPro" id="IPR018979">
    <property type="entry name" value="FERM_N"/>
</dbReference>
<dbReference type="InterPro" id="IPR018980">
    <property type="entry name" value="FERM_PH-like_C"/>
</dbReference>
<dbReference type="InterPro" id="IPR011993">
    <property type="entry name" value="PH-like_dom_sf"/>
</dbReference>
<dbReference type="InterPro" id="IPR029071">
    <property type="entry name" value="Ubiquitin-like_domsf"/>
</dbReference>
<dbReference type="PANTHER" id="PTHR23280">
    <property type="entry name" value="4.1 G PROTEIN"/>
    <property type="match status" value="1"/>
</dbReference>
<dbReference type="PANTHER" id="PTHR23280:SF8">
    <property type="entry name" value="FERM DOMAIN-CONTAINING PROTEIN 3"/>
    <property type="match status" value="1"/>
</dbReference>
<dbReference type="Pfam" id="PF08736">
    <property type="entry name" value="FA"/>
    <property type="match status" value="1"/>
</dbReference>
<dbReference type="Pfam" id="PF09380">
    <property type="entry name" value="FERM_C"/>
    <property type="match status" value="1"/>
</dbReference>
<dbReference type="Pfam" id="PF00373">
    <property type="entry name" value="FERM_M"/>
    <property type="match status" value="1"/>
</dbReference>
<dbReference type="Pfam" id="PF09379">
    <property type="entry name" value="FERM_N"/>
    <property type="match status" value="1"/>
</dbReference>
<dbReference type="PRINTS" id="PR00935">
    <property type="entry name" value="BAND41"/>
</dbReference>
<dbReference type="PRINTS" id="PR00661">
    <property type="entry name" value="ERMFAMILY"/>
</dbReference>
<dbReference type="SMART" id="SM00295">
    <property type="entry name" value="B41"/>
    <property type="match status" value="1"/>
</dbReference>
<dbReference type="SMART" id="SM01195">
    <property type="entry name" value="FA"/>
    <property type="match status" value="1"/>
</dbReference>
<dbReference type="SMART" id="SM01196">
    <property type="entry name" value="FERM_C"/>
    <property type="match status" value="1"/>
</dbReference>
<dbReference type="SUPFAM" id="SSF50729">
    <property type="entry name" value="PH domain-like"/>
    <property type="match status" value="1"/>
</dbReference>
<dbReference type="SUPFAM" id="SSF47031">
    <property type="entry name" value="Second domain of FERM"/>
    <property type="match status" value="1"/>
</dbReference>
<dbReference type="SUPFAM" id="SSF54236">
    <property type="entry name" value="Ubiquitin-like"/>
    <property type="match status" value="1"/>
</dbReference>
<dbReference type="PROSITE" id="PS00660">
    <property type="entry name" value="FERM_1"/>
    <property type="match status" value="1"/>
</dbReference>
<dbReference type="PROSITE" id="PS50057">
    <property type="entry name" value="FERM_3"/>
    <property type="match status" value="1"/>
</dbReference>